<gene>
    <name type="primary">ASIP</name>
</gene>
<dbReference type="EMBL" id="X99692">
    <property type="protein sequence ID" value="CAA68004.1"/>
    <property type="molecule type" value="mRNA"/>
</dbReference>
<dbReference type="EMBL" id="X99691">
    <property type="protein sequence ID" value="CAA68003.1"/>
    <property type="molecule type" value="Genomic_DNA"/>
</dbReference>
<dbReference type="EMBL" id="AY352659">
    <property type="protein sequence ID" value="AAQ56605.2"/>
    <property type="molecule type" value="Genomic_DNA"/>
</dbReference>
<dbReference type="EMBL" id="AY348953">
    <property type="protein sequence ID" value="AAQ56605.2"/>
    <property type="status" value="JOINED"/>
    <property type="molecule type" value="Genomic_DNA"/>
</dbReference>
<dbReference type="EMBL" id="AY348954">
    <property type="protein sequence ID" value="AAQ56605.2"/>
    <property type="status" value="JOINED"/>
    <property type="molecule type" value="Genomic_DNA"/>
</dbReference>
<dbReference type="EMBL" id="BC102291">
    <property type="protein sequence ID" value="AAI02292.1"/>
    <property type="molecule type" value="mRNA"/>
</dbReference>
<dbReference type="RefSeq" id="NP_996674.1">
    <property type="nucleotide sequence ID" value="NM_206843.2"/>
</dbReference>
<dbReference type="SMR" id="Q29414"/>
<dbReference type="FunCoup" id="Q29414">
    <property type="interactions" value="42"/>
</dbReference>
<dbReference type="STRING" id="9913.ENSBTAP00000045382"/>
<dbReference type="GlyCosmos" id="Q29414">
    <property type="glycosylation" value="1 site, No reported glycans"/>
</dbReference>
<dbReference type="GlyGen" id="Q29414">
    <property type="glycosylation" value="1 site"/>
</dbReference>
<dbReference type="PaxDb" id="9913-ENSBTAP00000045382"/>
<dbReference type="GeneID" id="404192"/>
<dbReference type="KEGG" id="bta:404192"/>
<dbReference type="CTD" id="434"/>
<dbReference type="VEuPathDB" id="HostDB:ENSBTAG00000034077"/>
<dbReference type="eggNOG" id="ENOG502S5XF">
    <property type="taxonomic scope" value="Eukaryota"/>
</dbReference>
<dbReference type="HOGENOM" id="CLU_138633_0_0_1"/>
<dbReference type="InParanoid" id="Q29414"/>
<dbReference type="OMA" id="CHCRFFR"/>
<dbReference type="OrthoDB" id="8717782at2759"/>
<dbReference type="TreeFam" id="TF330729"/>
<dbReference type="Proteomes" id="UP000009136">
    <property type="component" value="Chromosome 13"/>
</dbReference>
<dbReference type="Bgee" id="ENSBTAG00000034077">
    <property type="expression patterns" value="Expressed in caput epididymis and 99 other cell types or tissues"/>
</dbReference>
<dbReference type="GO" id="GO:0005615">
    <property type="term" value="C:extracellular space"/>
    <property type="evidence" value="ECO:0000250"/>
    <property type="project" value="UniProtKB"/>
</dbReference>
<dbReference type="GO" id="GO:0031779">
    <property type="term" value="F:melanocortin receptor binding"/>
    <property type="evidence" value="ECO:0000318"/>
    <property type="project" value="GO_Central"/>
</dbReference>
<dbReference type="GO" id="GO:0005184">
    <property type="term" value="F:neuropeptide hormone activity"/>
    <property type="evidence" value="ECO:0000318"/>
    <property type="project" value="GO_Central"/>
</dbReference>
<dbReference type="GO" id="GO:0009755">
    <property type="term" value="P:hormone-mediated signaling pathway"/>
    <property type="evidence" value="ECO:0007669"/>
    <property type="project" value="InterPro"/>
</dbReference>
<dbReference type="GO" id="GO:0042438">
    <property type="term" value="P:melanin biosynthetic process"/>
    <property type="evidence" value="ECO:0000250"/>
    <property type="project" value="UniProtKB"/>
</dbReference>
<dbReference type="GO" id="GO:0032438">
    <property type="term" value="P:melanosome organization"/>
    <property type="evidence" value="ECO:0000318"/>
    <property type="project" value="GO_Central"/>
</dbReference>
<dbReference type="Gene3D" id="4.10.760.10">
    <property type="entry name" value="Agouti domain"/>
    <property type="match status" value="1"/>
</dbReference>
<dbReference type="InterPro" id="IPR007733">
    <property type="entry name" value="Agouti"/>
</dbReference>
<dbReference type="InterPro" id="IPR027300">
    <property type="entry name" value="Agouti_dom"/>
</dbReference>
<dbReference type="InterPro" id="IPR036836">
    <property type="entry name" value="Agouti_dom_sf"/>
</dbReference>
<dbReference type="PANTHER" id="PTHR16551">
    <property type="entry name" value="AGOUTI RELATED"/>
    <property type="match status" value="1"/>
</dbReference>
<dbReference type="PANTHER" id="PTHR16551:SF1">
    <property type="entry name" value="AGOUTI-SIGNALING PROTEIN"/>
    <property type="match status" value="1"/>
</dbReference>
<dbReference type="Pfam" id="PF05039">
    <property type="entry name" value="Agouti"/>
    <property type="match status" value="1"/>
</dbReference>
<dbReference type="SMART" id="SM00792">
    <property type="entry name" value="Agouti"/>
    <property type="match status" value="1"/>
</dbReference>
<dbReference type="SUPFAM" id="SSF57055">
    <property type="entry name" value="Agouti-related protein"/>
    <property type="match status" value="1"/>
</dbReference>
<dbReference type="PROSITE" id="PS60024">
    <property type="entry name" value="AGOUTI_1"/>
    <property type="match status" value="1"/>
</dbReference>
<dbReference type="PROSITE" id="PS51150">
    <property type="entry name" value="AGOUTI_2"/>
    <property type="match status" value="1"/>
</dbReference>
<name>ASIP_BOVIN</name>
<reference key="1">
    <citation type="journal article" date="2005" name="Pigment Cell Res.">
        <title>Widespread expression of the bovine Agouti gene results from at least three alternative promoters.</title>
        <authorList>
            <person name="Girardot M."/>
            <person name="Martin J."/>
            <person name="Guibert S."/>
            <person name="Leveziel H."/>
            <person name="Julien R."/>
            <person name="Oulmouden A."/>
        </authorList>
    </citation>
    <scope>NUCLEOTIDE SEQUENCE [GENOMIC DNA / MRNA]</scope>
    <source>
        <tissue>Kidney</tissue>
    </source>
</reference>
<reference key="2">
    <citation type="submission" date="2003-07" db="EMBL/GenBank/DDBJ databases">
        <title>Agouti variation within wild-type coat color in cattle is not dependent on changes in the coding sequence of the ASIP gene.</title>
        <authorList>
            <person name="Royo L.J."/>
            <person name="Alvarez I."/>
            <person name="Fernandez I."/>
            <person name="Arranz J.J."/>
            <person name="Gomez E."/>
            <person name="Goyache F."/>
        </authorList>
    </citation>
    <scope>NUCLEOTIDE SEQUENCE [GENOMIC DNA]</scope>
</reference>
<reference key="3">
    <citation type="submission" date="2005-08" db="EMBL/GenBank/DDBJ databases">
        <authorList>
            <consortium name="NIH - Mammalian Gene Collection (MGC) project"/>
        </authorList>
    </citation>
    <scope>NUCLEOTIDE SEQUENCE [LARGE SCALE MRNA]</scope>
    <source>
        <strain>Crossbred X Angus</strain>
        <tissue>Ileum</tissue>
    </source>
</reference>
<proteinExistence type="evidence at transcript level"/>
<comment type="function">
    <text evidence="3">Involved in the regulation of melanogenesis. The binding of ASP to MC1R precludes alpha-MSH initiated signaling and thus blocks production of cAMP, leading to a down-regulation of eumelanogenesis (brown/black pigment) and thus increasing synthesis of pheomelanin (yellow/red pigment) (By similarity).</text>
</comment>
<comment type="subcellular location">
    <subcellularLocation>
        <location evidence="2">Secreted</location>
    </subcellularLocation>
</comment>
<comment type="domain">
    <text evidence="1">The presence of a 'disulfide through disulfide knot' structurally defines this protein as a knottin.</text>
</comment>
<keyword id="KW-1015">Disulfide bond</keyword>
<keyword id="KW-0325">Glycoprotein</keyword>
<keyword id="KW-0960">Knottin</keyword>
<keyword id="KW-1185">Reference proteome</keyword>
<keyword id="KW-0964">Secreted</keyword>
<keyword id="KW-0732">Signal</keyword>
<sequence length="133" mass="14841">MDVSRLLLATLLVCLCFLTAYSHLAPEEKPRDERNLKNNSSMNLLDFPSVSIVALNKKSKKISRNEAEKKKRPSKRKAPMKNVARTRPPPPTPCVATRDSCKPPAPACCDPCAFCQCRFFRSACSCRVLNPTC</sequence>
<protein>
    <recommendedName>
        <fullName>Agouti-signaling protein</fullName>
        <shortName>ASP</shortName>
    </recommendedName>
    <alternativeName>
        <fullName>Agouti switch protein</fullName>
    </alternativeName>
</protein>
<evidence type="ECO:0000250" key="1"/>
<evidence type="ECO:0000250" key="2">
    <source>
        <dbReference type="UniProtKB" id="P42127"/>
    </source>
</evidence>
<evidence type="ECO:0000250" key="3">
    <source>
        <dbReference type="UniProtKB" id="Q03288"/>
    </source>
</evidence>
<evidence type="ECO:0000255" key="4"/>
<evidence type="ECO:0000255" key="5">
    <source>
        <dbReference type="PROSITE-ProRule" id="PRU00494"/>
    </source>
</evidence>
<evidence type="ECO:0000256" key="6">
    <source>
        <dbReference type="SAM" id="MobiDB-lite"/>
    </source>
</evidence>
<feature type="signal peptide" evidence="4">
    <location>
        <begin position="1"/>
        <end position="22"/>
    </location>
</feature>
<feature type="chain" id="PRO_0000001024" description="Agouti-signaling protein">
    <location>
        <begin position="23"/>
        <end position="133"/>
    </location>
</feature>
<feature type="domain" description="Agouti" evidence="5">
    <location>
        <begin position="94"/>
        <end position="133"/>
    </location>
</feature>
<feature type="region of interest" description="Disordered" evidence="6">
    <location>
        <begin position="56"/>
        <end position="95"/>
    </location>
</feature>
<feature type="compositionally biased region" description="Basic residues" evidence="6">
    <location>
        <begin position="70"/>
        <end position="79"/>
    </location>
</feature>
<feature type="glycosylation site" description="N-linked (GlcNAc...) asparagine" evidence="4">
    <location>
        <position position="39"/>
    </location>
</feature>
<feature type="disulfide bond" evidence="5">
    <location>
        <begin position="94"/>
        <end position="109"/>
    </location>
</feature>
<feature type="disulfide bond" evidence="5">
    <location>
        <begin position="101"/>
        <end position="115"/>
    </location>
</feature>
<feature type="disulfide bond" evidence="5">
    <location>
        <begin position="108"/>
        <end position="126"/>
    </location>
</feature>
<feature type="disulfide bond" evidence="5">
    <location>
        <begin position="112"/>
        <end position="133"/>
    </location>
</feature>
<feature type="disulfide bond" evidence="5">
    <location>
        <begin position="117"/>
        <end position="124"/>
    </location>
</feature>
<organism>
    <name type="scientific">Bos taurus</name>
    <name type="common">Bovine</name>
    <dbReference type="NCBI Taxonomy" id="9913"/>
    <lineage>
        <taxon>Eukaryota</taxon>
        <taxon>Metazoa</taxon>
        <taxon>Chordata</taxon>
        <taxon>Craniata</taxon>
        <taxon>Vertebrata</taxon>
        <taxon>Euteleostomi</taxon>
        <taxon>Mammalia</taxon>
        <taxon>Eutheria</taxon>
        <taxon>Laurasiatheria</taxon>
        <taxon>Artiodactyla</taxon>
        <taxon>Ruminantia</taxon>
        <taxon>Pecora</taxon>
        <taxon>Bovidae</taxon>
        <taxon>Bovinae</taxon>
        <taxon>Bos</taxon>
    </lineage>
</organism>
<accession>Q29414</accession>
<accession>Q3T0R3</accession>
<accession>Q53Z62</accession>